<sequence>MSAEMTDLNFAEGRPLLVDKDGITVLLQEYVTQEHDIETAHGIVHVTMCGTPKLNRPVILTYHDIGLNHKTCFNSLFNFEDMHEITQHFSVCHVDAPGQQEGAASFPAGYMYPSMDQLAEMLPGVIQQLGLKSVLGLGIGAGAYILTRFALNHPSMVEGLVLININPCAEGWMDWAATKISGWTHALPDMVISHLFSKDEVHSNHELVETYRQHIVQDINQNNLQLFVKSYNSRRDLEIERPFPGSNTVTLKCPALLVVGDSSPAVDAVVDCNSKLDPTKTTLLKMSDCGGFPQVVQPAKLAEAFKYFVQGMGYMPAASMTRLMRSRTGSAASSSSQDGNRSRSHTNEGSRSRSHTGDGNRSRAHTGDGNRSRSHTDSNNTNSEHNTPKSMEISC</sequence>
<keyword id="KW-0217">Developmental protein</keyword>
<keyword id="KW-1185">Reference proteome</keyword>
<keyword id="KW-0677">Repeat</keyword>
<gene>
    <name evidence="1" type="primary">ndrg1</name>
</gene>
<dbReference type="EMBL" id="BC081359">
    <property type="protein sequence ID" value="AAH81359.1"/>
    <property type="molecule type" value="mRNA"/>
</dbReference>
<dbReference type="RefSeq" id="NP_001008146.1">
    <property type="nucleotide sequence ID" value="NM_001008145.1"/>
</dbReference>
<dbReference type="SMR" id="Q66IG4"/>
<dbReference type="FunCoup" id="Q66IG4">
    <property type="interactions" value="1377"/>
</dbReference>
<dbReference type="STRING" id="8364.ENSXETP00000042148"/>
<dbReference type="ESTHER" id="xentr-ndrg1">
    <property type="family name" value="Ndr_family"/>
</dbReference>
<dbReference type="MEROPS" id="S33.988"/>
<dbReference type="PaxDb" id="8364-ENSXETP00000024039"/>
<dbReference type="GeneID" id="493508"/>
<dbReference type="KEGG" id="xtr:493508"/>
<dbReference type="AGR" id="Xenbase:XB-GENE-993273"/>
<dbReference type="CTD" id="10397"/>
<dbReference type="Xenbase" id="XB-GENE-993273">
    <property type="gene designation" value="ndrg1"/>
</dbReference>
<dbReference type="eggNOG" id="KOG2931">
    <property type="taxonomic scope" value="Eukaryota"/>
</dbReference>
<dbReference type="InParanoid" id="Q66IG4"/>
<dbReference type="OMA" id="NINCCAE"/>
<dbReference type="OrthoDB" id="741027at2759"/>
<dbReference type="Proteomes" id="UP000008143">
    <property type="component" value="Chromosome 6"/>
</dbReference>
<dbReference type="GO" id="GO:0048793">
    <property type="term" value="P:pronephros development"/>
    <property type="evidence" value="ECO:0000250"/>
    <property type="project" value="UniProtKB"/>
</dbReference>
<dbReference type="FunFam" id="3.40.50.1820:FF:000006">
    <property type="entry name" value="NDRG family member 3"/>
    <property type="match status" value="1"/>
</dbReference>
<dbReference type="Gene3D" id="3.40.50.1820">
    <property type="entry name" value="alpha/beta hydrolase"/>
    <property type="match status" value="1"/>
</dbReference>
<dbReference type="InterPro" id="IPR029058">
    <property type="entry name" value="AB_hydrolase_fold"/>
</dbReference>
<dbReference type="InterPro" id="IPR004142">
    <property type="entry name" value="NDRG"/>
</dbReference>
<dbReference type="PANTHER" id="PTHR11034">
    <property type="entry name" value="N-MYC DOWNSTREAM REGULATED"/>
    <property type="match status" value="1"/>
</dbReference>
<dbReference type="Pfam" id="PF03096">
    <property type="entry name" value="Ndr"/>
    <property type="match status" value="1"/>
</dbReference>
<dbReference type="SUPFAM" id="SSF53474">
    <property type="entry name" value="alpha/beta-Hydrolases"/>
    <property type="match status" value="1"/>
</dbReference>
<name>NDRG1_XENTR</name>
<feature type="chain" id="PRO_0000232427" description="Protein NDRG1">
    <location>
        <begin position="1"/>
        <end position="395"/>
    </location>
</feature>
<feature type="repeat" description="1" evidence="2">
    <location>
        <begin position="339"/>
        <end position="348"/>
    </location>
</feature>
<feature type="repeat" description="2" evidence="2">
    <location>
        <begin position="349"/>
        <end position="358"/>
    </location>
</feature>
<feature type="repeat" description="3" evidence="2">
    <location>
        <begin position="359"/>
        <end position="368"/>
    </location>
</feature>
<feature type="repeat" description="4" evidence="2">
    <location>
        <begin position="369"/>
        <end position="378"/>
    </location>
</feature>
<feature type="region of interest" description="Disordered" evidence="3">
    <location>
        <begin position="325"/>
        <end position="395"/>
    </location>
</feature>
<feature type="region of interest" description="4 X 10 AA tandem repeats of G-[NS]-R-S-R-[AS]-H-T-[DGN]-[DES]" evidence="2">
    <location>
        <begin position="339"/>
        <end position="378"/>
    </location>
</feature>
<feature type="compositionally biased region" description="Low complexity" evidence="3">
    <location>
        <begin position="326"/>
        <end position="339"/>
    </location>
</feature>
<feature type="compositionally biased region" description="Basic and acidic residues" evidence="3">
    <location>
        <begin position="345"/>
        <end position="376"/>
    </location>
</feature>
<feature type="compositionally biased region" description="Polar residues" evidence="3">
    <location>
        <begin position="377"/>
        <end position="389"/>
    </location>
</feature>
<evidence type="ECO:0000250" key="1">
    <source>
        <dbReference type="UniProtKB" id="Q641F2"/>
    </source>
</evidence>
<evidence type="ECO:0000255" key="2"/>
<evidence type="ECO:0000256" key="3">
    <source>
        <dbReference type="SAM" id="MobiDB-lite"/>
    </source>
</evidence>
<evidence type="ECO:0000312" key="4">
    <source>
        <dbReference type="EMBL" id="AAH81359.1"/>
    </source>
</evidence>
<organism>
    <name type="scientific">Xenopus tropicalis</name>
    <name type="common">Western clawed frog</name>
    <name type="synonym">Silurana tropicalis</name>
    <dbReference type="NCBI Taxonomy" id="8364"/>
    <lineage>
        <taxon>Eukaryota</taxon>
        <taxon>Metazoa</taxon>
        <taxon>Chordata</taxon>
        <taxon>Craniata</taxon>
        <taxon>Vertebrata</taxon>
        <taxon>Euteleostomi</taxon>
        <taxon>Amphibia</taxon>
        <taxon>Batrachia</taxon>
        <taxon>Anura</taxon>
        <taxon>Pipoidea</taxon>
        <taxon>Pipidae</taxon>
        <taxon>Xenopodinae</taxon>
        <taxon>Xenopus</taxon>
        <taxon>Silurana</taxon>
    </lineage>
</organism>
<reference evidence="4" key="1">
    <citation type="submission" date="2004-08" db="EMBL/GenBank/DDBJ databases">
        <authorList>
            <consortium name="NIH - Xenopus Gene Collection (XGC) project"/>
        </authorList>
    </citation>
    <scope>NUCLEOTIDE SEQUENCE [LARGE SCALE MRNA]</scope>
    <source>
        <tissue evidence="4">Embryo</tissue>
    </source>
</reference>
<accession>Q66IG4</accession>
<comment type="function">
    <text evidence="1">May be involved in pronephros development, after specification of the pronephros.</text>
</comment>
<comment type="similarity">
    <text evidence="2">Belongs to the NDRG family.</text>
</comment>
<protein>
    <recommendedName>
        <fullName>Protein NDRG1</fullName>
    </recommendedName>
</protein>
<proteinExistence type="evidence at transcript level"/>